<comment type="function">
    <text evidence="1">One of the early assembly proteins it binds 23S rRNA. One of the proteins that surrounds the polypeptide exit tunnel on the outside of the ribosome. Forms the main docking site for trigger factor binding to the ribosome.</text>
</comment>
<comment type="subunit">
    <text evidence="1">Part of the 50S ribosomal subunit. Contacts protein L29, and trigger factor when it is bound to the ribosome.</text>
</comment>
<comment type="similarity">
    <text evidence="1">Belongs to the universal ribosomal protein uL23 family.</text>
</comment>
<proteinExistence type="inferred from homology"/>
<gene>
    <name evidence="1" type="primary">rplW</name>
    <name type="ordered locus">BR1231</name>
    <name type="ordered locus">BS1330_I1227</name>
</gene>
<name>RL23_BRUSU</name>
<accession>Q8G078</accession>
<accession>G0KAF2</accession>
<reference key="1">
    <citation type="journal article" date="2002" name="Proc. Natl. Acad. Sci. U.S.A.">
        <title>The Brucella suis genome reveals fundamental similarities between animal and plant pathogens and symbionts.</title>
        <authorList>
            <person name="Paulsen I.T."/>
            <person name="Seshadri R."/>
            <person name="Nelson K.E."/>
            <person name="Eisen J.A."/>
            <person name="Heidelberg J.F."/>
            <person name="Read T.D."/>
            <person name="Dodson R.J."/>
            <person name="Umayam L.A."/>
            <person name="Brinkac L.M."/>
            <person name="Beanan M.J."/>
            <person name="Daugherty S.C."/>
            <person name="DeBoy R.T."/>
            <person name="Durkin A.S."/>
            <person name="Kolonay J.F."/>
            <person name="Madupu R."/>
            <person name="Nelson W.C."/>
            <person name="Ayodeji B."/>
            <person name="Kraul M."/>
            <person name="Shetty J."/>
            <person name="Malek J.A."/>
            <person name="Van Aken S.E."/>
            <person name="Riedmuller S."/>
            <person name="Tettelin H."/>
            <person name="Gill S.R."/>
            <person name="White O."/>
            <person name="Salzberg S.L."/>
            <person name="Hoover D.L."/>
            <person name="Lindler L.E."/>
            <person name="Halling S.M."/>
            <person name="Boyle S.M."/>
            <person name="Fraser C.M."/>
        </authorList>
    </citation>
    <scope>NUCLEOTIDE SEQUENCE [LARGE SCALE GENOMIC DNA]</scope>
    <source>
        <strain>1330</strain>
    </source>
</reference>
<reference key="2">
    <citation type="journal article" date="2011" name="J. Bacteriol.">
        <title>Revised genome sequence of Brucella suis 1330.</title>
        <authorList>
            <person name="Tae H."/>
            <person name="Shallom S."/>
            <person name="Settlage R."/>
            <person name="Preston D."/>
            <person name="Adams L.G."/>
            <person name="Garner H.R."/>
        </authorList>
    </citation>
    <scope>NUCLEOTIDE SEQUENCE [LARGE SCALE GENOMIC DNA]</scope>
    <source>
        <strain>1330</strain>
    </source>
</reference>
<protein>
    <recommendedName>
        <fullName evidence="1">Large ribosomal subunit protein uL23</fullName>
    </recommendedName>
    <alternativeName>
        <fullName evidence="2">50S ribosomal protein L23</fullName>
    </alternativeName>
</protein>
<evidence type="ECO:0000255" key="1">
    <source>
        <dbReference type="HAMAP-Rule" id="MF_01369"/>
    </source>
</evidence>
<evidence type="ECO:0000305" key="2"/>
<feature type="chain" id="PRO_0000272718" description="Large ribosomal subunit protein uL23">
    <location>
        <begin position="1"/>
        <end position="97"/>
    </location>
</feature>
<dbReference type="EMBL" id="AE014291">
    <property type="protein sequence ID" value="AAN30150.1"/>
    <property type="molecule type" value="Genomic_DNA"/>
</dbReference>
<dbReference type="EMBL" id="CP002997">
    <property type="protein sequence ID" value="AEM18568.1"/>
    <property type="molecule type" value="Genomic_DNA"/>
</dbReference>
<dbReference type="RefSeq" id="WP_004689765.1">
    <property type="nucleotide sequence ID" value="NZ_KN046804.1"/>
</dbReference>
<dbReference type="SMR" id="Q8G078"/>
<dbReference type="KEGG" id="bms:BR1231"/>
<dbReference type="KEGG" id="bsi:BS1330_I1227"/>
<dbReference type="PATRIC" id="fig|204722.21.peg.2245"/>
<dbReference type="HOGENOM" id="CLU_037562_3_1_5"/>
<dbReference type="Proteomes" id="UP000007104">
    <property type="component" value="Chromosome I"/>
</dbReference>
<dbReference type="GO" id="GO:1990904">
    <property type="term" value="C:ribonucleoprotein complex"/>
    <property type="evidence" value="ECO:0007669"/>
    <property type="project" value="UniProtKB-KW"/>
</dbReference>
<dbReference type="GO" id="GO:0005840">
    <property type="term" value="C:ribosome"/>
    <property type="evidence" value="ECO:0007669"/>
    <property type="project" value="UniProtKB-KW"/>
</dbReference>
<dbReference type="GO" id="GO:0019843">
    <property type="term" value="F:rRNA binding"/>
    <property type="evidence" value="ECO:0007669"/>
    <property type="project" value="UniProtKB-UniRule"/>
</dbReference>
<dbReference type="GO" id="GO:0003735">
    <property type="term" value="F:structural constituent of ribosome"/>
    <property type="evidence" value="ECO:0007669"/>
    <property type="project" value="InterPro"/>
</dbReference>
<dbReference type="GO" id="GO:0006412">
    <property type="term" value="P:translation"/>
    <property type="evidence" value="ECO:0007669"/>
    <property type="project" value="UniProtKB-UniRule"/>
</dbReference>
<dbReference type="FunFam" id="3.30.70.330:FF:000001">
    <property type="entry name" value="50S ribosomal protein L23"/>
    <property type="match status" value="1"/>
</dbReference>
<dbReference type="Gene3D" id="3.30.70.330">
    <property type="match status" value="1"/>
</dbReference>
<dbReference type="HAMAP" id="MF_01369_B">
    <property type="entry name" value="Ribosomal_uL23_B"/>
    <property type="match status" value="1"/>
</dbReference>
<dbReference type="InterPro" id="IPR012677">
    <property type="entry name" value="Nucleotide-bd_a/b_plait_sf"/>
</dbReference>
<dbReference type="InterPro" id="IPR013025">
    <property type="entry name" value="Ribosomal_uL23-like"/>
</dbReference>
<dbReference type="InterPro" id="IPR012678">
    <property type="entry name" value="Ribosomal_uL23/eL15/eS24_sf"/>
</dbReference>
<dbReference type="NCBIfam" id="NF004359">
    <property type="entry name" value="PRK05738.1-3"/>
    <property type="match status" value="1"/>
</dbReference>
<dbReference type="NCBIfam" id="NF004360">
    <property type="entry name" value="PRK05738.1-5"/>
    <property type="match status" value="1"/>
</dbReference>
<dbReference type="NCBIfam" id="NF004363">
    <property type="entry name" value="PRK05738.2-4"/>
    <property type="match status" value="1"/>
</dbReference>
<dbReference type="PANTHER" id="PTHR11620">
    <property type="entry name" value="60S RIBOSOMAL PROTEIN L23A"/>
    <property type="match status" value="1"/>
</dbReference>
<dbReference type="Pfam" id="PF00276">
    <property type="entry name" value="Ribosomal_L23"/>
    <property type="match status" value="1"/>
</dbReference>
<dbReference type="SUPFAM" id="SSF54189">
    <property type="entry name" value="Ribosomal proteins S24e, L23 and L15e"/>
    <property type="match status" value="1"/>
</dbReference>
<organism>
    <name type="scientific">Brucella suis biovar 1 (strain 1330)</name>
    <dbReference type="NCBI Taxonomy" id="204722"/>
    <lineage>
        <taxon>Bacteria</taxon>
        <taxon>Pseudomonadati</taxon>
        <taxon>Pseudomonadota</taxon>
        <taxon>Alphaproteobacteria</taxon>
        <taxon>Hyphomicrobiales</taxon>
        <taxon>Brucellaceae</taxon>
        <taxon>Brucella/Ochrobactrum group</taxon>
        <taxon>Brucella</taxon>
    </lineage>
</organism>
<keyword id="KW-0687">Ribonucleoprotein</keyword>
<keyword id="KW-0689">Ribosomal protein</keyword>
<keyword id="KW-0694">RNA-binding</keyword>
<keyword id="KW-0699">rRNA-binding</keyword>
<sequence length="97" mass="10535">MTDLRHYDVIVSPVITEKSTMVSEHNQVVFNVARKATKPEIKAAVEALFGVKVTAVNTAVRKGKVKRFRGLVGRQSDVKKAIVTLAEGQSIDVSTGL</sequence>